<comment type="function">
    <text evidence="1">Component of the cornified envelope of keratinocytes. May be involved in the interplay between adherens junctions and desmosomes. The function in the nucleus is not known (By similarity).</text>
</comment>
<comment type="subcellular location">
    <subcellularLocation>
        <location evidence="1">Cell junction</location>
    </subcellularLocation>
    <subcellularLocation>
        <location evidence="1">Nucleus</location>
    </subcellularLocation>
    <subcellularLocation>
        <location evidence="1">Cytoplasm</location>
        <location evidence="1">Cytoskeleton</location>
    </subcellularLocation>
</comment>
<comment type="alternative products">
    <event type="alternative splicing"/>
    <isoform>
        <id>Q5FWS6-1</id>
        <name>1</name>
        <sequence type="displayed"/>
    </isoform>
    <isoform>
        <id>Q5FWS6-2</id>
        <name>2</name>
        <name>C</name>
        <sequence type="described" ref="VSP_031908 VSP_031909 VSP_031910"/>
    </isoform>
</comment>
<comment type="similarity">
    <text evidence="8">Belongs to the kazrin family.</text>
</comment>
<sequence>MMEDNKQLALRIDGAVQSASQEVTNLRAELTATNRRLAELSGGGGGPGSGPGAATSASAAAVTVADSAVATMENHQHGAQVLLREEVVQLQEEVHLLRQMKEMLAKDLEESQGGKCSEVLSATELRVQLVQKEQELARAREALQAMKADRKRLKGEKTDLVSQMQQLYATLESREEQLRDFIRNYEQHRKESEDAVKALAKEKDLLEREKWELRRQAKEATDHAAALRSQLDLKDNRMKELEAELAMAKQSLATLTKDVPKRHSLAMPGETVLNGNQEWVVQADLPLTAAIRQSQQTLYHSHPPHPADRQAVRVSPCHSRQPSVISDASAAEGDRSSTPSDINSPRHRTHSLCNGDSPGPVQKSLHNPIVQSLEDLEDQKRKKKKEKMGFGSISRVFARGKQRKSLDPGLFDDSDSQCSPTRHSLSLSEGEEQMDRLQHVELVRTTPMSHWKAGTVQAWLEVVMAMPMYVKACAENVKSGKVLLSLSDEDLELGLGVCSSLHRRKLRLAIEDYRDAEAGRSLSKAADLDHHWVAKAWLNDIGLSQYSQAFQNHLVDGRMLNSLMKRDLEKHLNVSKKFHQVSILLGIELLYQVNFSREALQERRARCETQNTDPVVWTNQRVLKWVRDIDLKEYADNLTNSGVHGAVLVLEPTFNAEAMATALGIPSGKHILRRHLAEEMSTVFHPANSTGIRESERFGTPPGRASSITRAGKEDGSSNSKYRTGRLPLGKIGRGFSSKEPDYYDDYGSLENEDCGDDDLQGRPEQCRLEEYSSLEVTNV</sequence>
<evidence type="ECO:0000250" key="1"/>
<evidence type="ECO:0000250" key="2">
    <source>
        <dbReference type="UniProtKB" id="Q674X7"/>
    </source>
</evidence>
<evidence type="ECO:0000250" key="3">
    <source>
        <dbReference type="UniProtKB" id="Q69ZS8"/>
    </source>
</evidence>
<evidence type="ECO:0000255" key="4"/>
<evidence type="ECO:0000255" key="5">
    <source>
        <dbReference type="PROSITE-ProRule" id="PRU00184"/>
    </source>
</evidence>
<evidence type="ECO:0000256" key="6">
    <source>
        <dbReference type="SAM" id="MobiDB-lite"/>
    </source>
</evidence>
<evidence type="ECO:0000303" key="7">
    <source>
    </source>
</evidence>
<evidence type="ECO:0000305" key="8"/>
<protein>
    <recommendedName>
        <fullName>Kazrin</fullName>
    </recommendedName>
</protein>
<dbReference type="EMBL" id="AABR03041495">
    <property type="status" value="NOT_ANNOTATED_CDS"/>
    <property type="molecule type" value="Genomic_DNA"/>
</dbReference>
<dbReference type="EMBL" id="AABR03041163">
    <property type="status" value="NOT_ANNOTATED_CDS"/>
    <property type="molecule type" value="Genomic_DNA"/>
</dbReference>
<dbReference type="EMBL" id="BC089223">
    <property type="protein sequence ID" value="AAH89223.1"/>
    <property type="molecule type" value="mRNA"/>
</dbReference>
<dbReference type="RefSeq" id="NP_001014092.2">
    <property type="nucleotide sequence ID" value="NM_001014070.2"/>
</dbReference>
<dbReference type="RefSeq" id="NP_001402874.1">
    <molecule id="Q5FWS6-1"/>
    <property type="nucleotide sequence ID" value="NM_001415945.1"/>
</dbReference>
<dbReference type="SMR" id="Q5FWS6"/>
<dbReference type="FunCoup" id="Q5FWS6">
    <property type="interactions" value="2460"/>
</dbReference>
<dbReference type="STRING" id="10116.ENSRNOP00000019447"/>
<dbReference type="GlyGen" id="Q5FWS6">
    <property type="glycosylation" value="1 site"/>
</dbReference>
<dbReference type="iPTMnet" id="Q5FWS6"/>
<dbReference type="PhosphoSitePlus" id="Q5FWS6"/>
<dbReference type="PaxDb" id="10116-ENSRNOP00000019447"/>
<dbReference type="Ensembl" id="ENSRNOT00000019447.7">
    <molecule id="Q5FWS6-1"/>
    <property type="protein sequence ID" value="ENSRNOP00000019447.7"/>
    <property type="gene ID" value="ENSRNOG00000014322.8"/>
</dbReference>
<dbReference type="GeneID" id="313672"/>
<dbReference type="KEGG" id="rno:313672"/>
<dbReference type="UCSC" id="RGD:1359147">
    <molecule id="Q5FWS6-1"/>
    <property type="organism name" value="rat"/>
</dbReference>
<dbReference type="AGR" id="RGD:1359147"/>
<dbReference type="CTD" id="23254"/>
<dbReference type="RGD" id="1359147">
    <property type="gene designation" value="Kazn"/>
</dbReference>
<dbReference type="eggNOG" id="KOG0249">
    <property type="taxonomic scope" value="Eukaryota"/>
</dbReference>
<dbReference type="GeneTree" id="ENSGT00940000154570"/>
<dbReference type="HOGENOM" id="CLU_010768_2_0_1"/>
<dbReference type="InParanoid" id="Q5FWS6"/>
<dbReference type="OMA" id="RVQCEHQ"/>
<dbReference type="PhylomeDB" id="Q5FWS6"/>
<dbReference type="TreeFam" id="TF331216"/>
<dbReference type="Reactome" id="R-RNO-6809371">
    <property type="pathway name" value="Formation of the cornified envelope"/>
</dbReference>
<dbReference type="PRO" id="PR:Q5FWS6"/>
<dbReference type="Proteomes" id="UP000002494">
    <property type="component" value="Chromosome 5"/>
</dbReference>
<dbReference type="GO" id="GO:0001533">
    <property type="term" value="C:cornified envelope"/>
    <property type="evidence" value="ECO:0000266"/>
    <property type="project" value="RGD"/>
</dbReference>
<dbReference type="GO" id="GO:0005856">
    <property type="term" value="C:cytoskeleton"/>
    <property type="evidence" value="ECO:0007669"/>
    <property type="project" value="UniProtKB-SubCell"/>
</dbReference>
<dbReference type="GO" id="GO:0005829">
    <property type="term" value="C:cytosol"/>
    <property type="evidence" value="ECO:0007669"/>
    <property type="project" value="Ensembl"/>
</dbReference>
<dbReference type="GO" id="GO:0030057">
    <property type="term" value="C:desmosome"/>
    <property type="evidence" value="ECO:0000266"/>
    <property type="project" value="RGD"/>
</dbReference>
<dbReference type="GO" id="GO:0016607">
    <property type="term" value="C:nuclear speck"/>
    <property type="evidence" value="ECO:0007669"/>
    <property type="project" value="Ensembl"/>
</dbReference>
<dbReference type="GO" id="GO:0031424">
    <property type="term" value="P:keratinization"/>
    <property type="evidence" value="ECO:0007669"/>
    <property type="project" value="UniProtKB-KW"/>
</dbReference>
<dbReference type="CDD" id="cd09564">
    <property type="entry name" value="SAM_kazrin_repeat1"/>
    <property type="match status" value="1"/>
</dbReference>
<dbReference type="CDD" id="cd09567">
    <property type="entry name" value="SAM_kazrin_repeat2"/>
    <property type="match status" value="1"/>
</dbReference>
<dbReference type="CDD" id="cd09570">
    <property type="entry name" value="SAM_kazrin_repeat3"/>
    <property type="match status" value="1"/>
</dbReference>
<dbReference type="FunFam" id="1.10.150.50:FF:000048">
    <property type="entry name" value="kazrin isoform X1"/>
    <property type="match status" value="1"/>
</dbReference>
<dbReference type="FunFam" id="1.10.150.50:FF:000005">
    <property type="entry name" value="Liprin-beta-1 isoform 1"/>
    <property type="match status" value="1"/>
</dbReference>
<dbReference type="FunFam" id="1.10.150.50:FF:000007">
    <property type="entry name" value="Liprin-beta-1 isoform 1"/>
    <property type="match status" value="1"/>
</dbReference>
<dbReference type="Gene3D" id="1.10.150.50">
    <property type="entry name" value="Transcription Factor, Ets-1"/>
    <property type="match status" value="3"/>
</dbReference>
<dbReference type="InterPro" id="IPR037614">
    <property type="entry name" value="Kazrin"/>
</dbReference>
<dbReference type="InterPro" id="IPR037613">
    <property type="entry name" value="Kazrin_SAM_rpt_1"/>
</dbReference>
<dbReference type="InterPro" id="IPR037615">
    <property type="entry name" value="Kazrin_SAM_rpt_2"/>
</dbReference>
<dbReference type="InterPro" id="IPR037616">
    <property type="entry name" value="Kazrin_SAM_rpt_3"/>
</dbReference>
<dbReference type="InterPro" id="IPR001660">
    <property type="entry name" value="SAM"/>
</dbReference>
<dbReference type="InterPro" id="IPR013761">
    <property type="entry name" value="SAM/pointed_sf"/>
</dbReference>
<dbReference type="PANTHER" id="PTHR12776:SF1">
    <property type="entry name" value="KAZRIN"/>
    <property type="match status" value="1"/>
</dbReference>
<dbReference type="PANTHER" id="PTHR12776">
    <property type="entry name" value="KAZRIN-RELATED"/>
    <property type="match status" value="1"/>
</dbReference>
<dbReference type="Pfam" id="PF00536">
    <property type="entry name" value="SAM_1"/>
    <property type="match status" value="2"/>
</dbReference>
<dbReference type="Pfam" id="PF07647">
    <property type="entry name" value="SAM_2"/>
    <property type="match status" value="1"/>
</dbReference>
<dbReference type="SMART" id="SM00454">
    <property type="entry name" value="SAM"/>
    <property type="match status" value="3"/>
</dbReference>
<dbReference type="SUPFAM" id="SSF47769">
    <property type="entry name" value="SAM/Pointed domain"/>
    <property type="match status" value="3"/>
</dbReference>
<dbReference type="PROSITE" id="PS50105">
    <property type="entry name" value="SAM_DOMAIN"/>
    <property type="match status" value="3"/>
</dbReference>
<proteinExistence type="evidence at transcript level"/>
<accession>Q5FWS6</accession>
<keyword id="KW-0025">Alternative splicing</keyword>
<keyword id="KW-0965">Cell junction</keyword>
<keyword id="KW-0175">Coiled coil</keyword>
<keyword id="KW-0963">Cytoplasm</keyword>
<keyword id="KW-0206">Cytoskeleton</keyword>
<keyword id="KW-0417">Keratinization</keyword>
<keyword id="KW-0539">Nucleus</keyword>
<keyword id="KW-0597">Phosphoprotein</keyword>
<keyword id="KW-1185">Reference proteome</keyword>
<keyword id="KW-0677">Repeat</keyword>
<reference key="1">
    <citation type="journal article" date="2004" name="Nature">
        <title>Genome sequence of the Brown Norway rat yields insights into mammalian evolution.</title>
        <authorList>
            <person name="Gibbs R.A."/>
            <person name="Weinstock G.M."/>
            <person name="Metzker M.L."/>
            <person name="Muzny D.M."/>
            <person name="Sodergren E.J."/>
            <person name="Scherer S."/>
            <person name="Scott G."/>
            <person name="Steffen D."/>
            <person name="Worley K.C."/>
            <person name="Burch P.E."/>
            <person name="Okwuonu G."/>
            <person name="Hines S."/>
            <person name="Lewis L."/>
            <person name="Deramo C."/>
            <person name="Delgado O."/>
            <person name="Dugan-Rocha S."/>
            <person name="Miner G."/>
            <person name="Morgan M."/>
            <person name="Hawes A."/>
            <person name="Gill R."/>
            <person name="Holt R.A."/>
            <person name="Adams M.D."/>
            <person name="Amanatides P.G."/>
            <person name="Baden-Tillson H."/>
            <person name="Barnstead M."/>
            <person name="Chin S."/>
            <person name="Evans C.A."/>
            <person name="Ferriera S."/>
            <person name="Fosler C."/>
            <person name="Glodek A."/>
            <person name="Gu Z."/>
            <person name="Jennings D."/>
            <person name="Kraft C.L."/>
            <person name="Nguyen T."/>
            <person name="Pfannkoch C.M."/>
            <person name="Sitter C."/>
            <person name="Sutton G.G."/>
            <person name="Venter J.C."/>
            <person name="Woodage T."/>
            <person name="Smith D."/>
            <person name="Lee H.-M."/>
            <person name="Gustafson E."/>
            <person name="Cahill P."/>
            <person name="Kana A."/>
            <person name="Doucette-Stamm L."/>
            <person name="Weinstock K."/>
            <person name="Fechtel K."/>
            <person name="Weiss R.B."/>
            <person name="Dunn D.M."/>
            <person name="Green E.D."/>
            <person name="Blakesley R.W."/>
            <person name="Bouffard G.G."/>
            <person name="De Jong P.J."/>
            <person name="Osoegawa K."/>
            <person name="Zhu B."/>
            <person name="Marra M."/>
            <person name="Schein J."/>
            <person name="Bosdet I."/>
            <person name="Fjell C."/>
            <person name="Jones S."/>
            <person name="Krzywinski M."/>
            <person name="Mathewson C."/>
            <person name="Siddiqui A."/>
            <person name="Wye N."/>
            <person name="McPherson J."/>
            <person name="Zhao S."/>
            <person name="Fraser C.M."/>
            <person name="Shetty J."/>
            <person name="Shatsman S."/>
            <person name="Geer K."/>
            <person name="Chen Y."/>
            <person name="Abramzon S."/>
            <person name="Nierman W.C."/>
            <person name="Havlak P.H."/>
            <person name="Chen R."/>
            <person name="Durbin K.J."/>
            <person name="Egan A."/>
            <person name="Ren Y."/>
            <person name="Song X.-Z."/>
            <person name="Li B."/>
            <person name="Liu Y."/>
            <person name="Qin X."/>
            <person name="Cawley S."/>
            <person name="Cooney A.J."/>
            <person name="D'Souza L.M."/>
            <person name="Martin K."/>
            <person name="Wu J.Q."/>
            <person name="Gonzalez-Garay M.L."/>
            <person name="Jackson A.R."/>
            <person name="Kalafus K.J."/>
            <person name="McLeod M.P."/>
            <person name="Milosavljevic A."/>
            <person name="Virk D."/>
            <person name="Volkov A."/>
            <person name="Wheeler D.A."/>
            <person name="Zhang Z."/>
            <person name="Bailey J.A."/>
            <person name="Eichler E.E."/>
            <person name="Tuzun E."/>
            <person name="Birney E."/>
            <person name="Mongin E."/>
            <person name="Ureta-Vidal A."/>
            <person name="Woodwark C."/>
            <person name="Zdobnov E."/>
            <person name="Bork P."/>
            <person name="Suyama M."/>
            <person name="Torrents D."/>
            <person name="Alexandersson M."/>
            <person name="Trask B.J."/>
            <person name="Young J.M."/>
            <person name="Huang H."/>
            <person name="Wang H."/>
            <person name="Xing H."/>
            <person name="Daniels S."/>
            <person name="Gietzen D."/>
            <person name="Schmidt J."/>
            <person name="Stevens K."/>
            <person name="Vitt U."/>
            <person name="Wingrove J."/>
            <person name="Camara F."/>
            <person name="Mar Alba M."/>
            <person name="Abril J.F."/>
            <person name="Guigo R."/>
            <person name="Smit A."/>
            <person name="Dubchak I."/>
            <person name="Rubin E.M."/>
            <person name="Couronne O."/>
            <person name="Poliakov A."/>
            <person name="Huebner N."/>
            <person name="Ganten D."/>
            <person name="Goesele C."/>
            <person name="Hummel O."/>
            <person name="Kreitler T."/>
            <person name="Lee Y.-A."/>
            <person name="Monti J."/>
            <person name="Schulz H."/>
            <person name="Zimdahl H."/>
            <person name="Himmelbauer H."/>
            <person name="Lehrach H."/>
            <person name="Jacob H.J."/>
            <person name="Bromberg S."/>
            <person name="Gullings-Handley J."/>
            <person name="Jensen-Seaman M.I."/>
            <person name="Kwitek A.E."/>
            <person name="Lazar J."/>
            <person name="Pasko D."/>
            <person name="Tonellato P.J."/>
            <person name="Twigger S."/>
            <person name="Ponting C.P."/>
            <person name="Duarte J.M."/>
            <person name="Rice S."/>
            <person name="Goodstadt L."/>
            <person name="Beatson S.A."/>
            <person name="Emes R.D."/>
            <person name="Winter E.E."/>
            <person name="Webber C."/>
            <person name="Brandt P."/>
            <person name="Nyakatura G."/>
            <person name="Adetobi M."/>
            <person name="Chiaromonte F."/>
            <person name="Elnitski L."/>
            <person name="Eswara P."/>
            <person name="Hardison R.C."/>
            <person name="Hou M."/>
            <person name="Kolbe D."/>
            <person name="Makova K."/>
            <person name="Miller W."/>
            <person name="Nekrutenko A."/>
            <person name="Riemer C."/>
            <person name="Schwartz S."/>
            <person name="Taylor J."/>
            <person name="Yang S."/>
            <person name="Zhang Y."/>
            <person name="Lindpaintner K."/>
            <person name="Andrews T.D."/>
            <person name="Caccamo M."/>
            <person name="Clamp M."/>
            <person name="Clarke L."/>
            <person name="Curwen V."/>
            <person name="Durbin R.M."/>
            <person name="Eyras E."/>
            <person name="Searle S.M."/>
            <person name="Cooper G.M."/>
            <person name="Batzoglou S."/>
            <person name="Brudno M."/>
            <person name="Sidow A."/>
            <person name="Stone E.A."/>
            <person name="Payseur B.A."/>
            <person name="Bourque G."/>
            <person name="Lopez-Otin C."/>
            <person name="Puente X.S."/>
            <person name="Chakrabarti K."/>
            <person name="Chatterji S."/>
            <person name="Dewey C."/>
            <person name="Pachter L."/>
            <person name="Bray N."/>
            <person name="Yap V.B."/>
            <person name="Caspi A."/>
            <person name="Tesler G."/>
            <person name="Pevzner P.A."/>
            <person name="Haussler D."/>
            <person name="Roskin K.M."/>
            <person name="Baertsch R."/>
            <person name="Clawson H."/>
            <person name="Furey T.S."/>
            <person name="Hinrichs A.S."/>
            <person name="Karolchik D."/>
            <person name="Kent W.J."/>
            <person name="Rosenbloom K.R."/>
            <person name="Trumbower H."/>
            <person name="Weirauch M."/>
            <person name="Cooper D.N."/>
            <person name="Stenson P.D."/>
            <person name="Ma B."/>
            <person name="Brent M."/>
            <person name="Arumugam M."/>
            <person name="Shteynberg D."/>
            <person name="Copley R.R."/>
            <person name="Taylor M.S."/>
            <person name="Riethman H."/>
            <person name="Mudunuri U."/>
            <person name="Peterson J."/>
            <person name="Guyer M."/>
            <person name="Felsenfeld A."/>
            <person name="Old S."/>
            <person name="Mockrin S."/>
            <person name="Collins F.S."/>
        </authorList>
    </citation>
    <scope>NUCLEOTIDE SEQUENCE [LARGE SCALE GENOMIC DNA]</scope>
    <source>
        <strain>Brown Norway</strain>
    </source>
</reference>
<reference key="2">
    <citation type="journal article" date="2004" name="Genome Res.">
        <title>The status, quality, and expansion of the NIH full-length cDNA project: the Mammalian Gene Collection (MGC).</title>
        <authorList>
            <consortium name="The MGC Project Team"/>
        </authorList>
    </citation>
    <scope>NUCLEOTIDE SEQUENCE [LARGE SCALE MRNA] (ISOFORM 2)</scope>
    <source>
        <tissue>Brain</tissue>
    </source>
</reference>
<name>KAZRN_RAT</name>
<gene>
    <name type="primary">Kazn</name>
    <name type="synonym">Kaz</name>
</gene>
<organism>
    <name type="scientific">Rattus norvegicus</name>
    <name type="common">Rat</name>
    <dbReference type="NCBI Taxonomy" id="10116"/>
    <lineage>
        <taxon>Eukaryota</taxon>
        <taxon>Metazoa</taxon>
        <taxon>Chordata</taxon>
        <taxon>Craniata</taxon>
        <taxon>Vertebrata</taxon>
        <taxon>Euteleostomi</taxon>
        <taxon>Mammalia</taxon>
        <taxon>Eutheria</taxon>
        <taxon>Euarchontoglires</taxon>
        <taxon>Glires</taxon>
        <taxon>Rodentia</taxon>
        <taxon>Myomorpha</taxon>
        <taxon>Muroidea</taxon>
        <taxon>Muridae</taxon>
        <taxon>Murinae</taxon>
        <taxon>Rattus</taxon>
    </lineage>
</organism>
<feature type="chain" id="PRO_0000322455" description="Kazrin">
    <location>
        <begin position="1"/>
        <end position="780"/>
    </location>
</feature>
<feature type="domain" description="SAM 1" evidence="5">
    <location>
        <begin position="451"/>
        <end position="516"/>
    </location>
</feature>
<feature type="domain" description="SAM 2" evidence="5">
    <location>
        <begin position="529"/>
        <end position="593"/>
    </location>
</feature>
<feature type="domain" description="SAM 3" evidence="5">
    <location>
        <begin position="617"/>
        <end position="684"/>
    </location>
</feature>
<feature type="region of interest" description="Disordered" evidence="6">
    <location>
        <begin position="295"/>
        <end position="430"/>
    </location>
</feature>
<feature type="region of interest" description="Disordered" evidence="6">
    <location>
        <begin position="692"/>
        <end position="780"/>
    </location>
</feature>
<feature type="coiled-coil region" evidence="4">
    <location>
        <begin position="79"/>
        <end position="261"/>
    </location>
</feature>
<feature type="compositionally biased region" description="Polar residues" evidence="6">
    <location>
        <begin position="416"/>
        <end position="427"/>
    </location>
</feature>
<feature type="compositionally biased region" description="Basic and acidic residues" evidence="6">
    <location>
        <begin position="760"/>
        <end position="771"/>
    </location>
</feature>
<feature type="modified residue" description="Phosphoserine" evidence="2">
    <location>
        <position position="357"/>
    </location>
</feature>
<feature type="modified residue" description="Phosphoserine" evidence="3">
    <location>
        <position position="372"/>
    </location>
</feature>
<feature type="modified residue" description="Phosphoserine" evidence="2">
    <location>
        <position position="392"/>
    </location>
</feature>
<feature type="splice variant" id="VSP_031908" description="In isoform 2." evidence="7">
    <location>
        <begin position="1"/>
        <end position="99"/>
    </location>
</feature>
<feature type="splice variant" id="VSP_031909" description="In isoform 2." evidence="7">
    <original>DSDSQCSPTRHSLS</original>
    <variation>GTAPDYYIEEDADW</variation>
    <location>
        <begin position="413"/>
        <end position="426"/>
    </location>
</feature>
<feature type="splice variant" id="VSP_031910" description="In isoform 2." evidence="7">
    <location>
        <begin position="427"/>
        <end position="780"/>
    </location>
</feature>